<protein>
    <recommendedName>
        <fullName evidence="3">Hemoglobin subunit alpha</fullName>
    </recommendedName>
    <alternativeName>
        <fullName evidence="3">Alpha-globin</fullName>
    </alternativeName>
    <alternativeName>
        <fullName evidence="3 7">Hemoglobin alpha chain</fullName>
    </alternativeName>
    <component>
        <recommendedName>
            <fullName evidence="2">Hemopressin</fullName>
        </recommendedName>
    </component>
</protein>
<dbReference type="PDB" id="3FH9">
    <property type="method" value="X-ray"/>
    <property type="resolution" value="1.62 A"/>
    <property type="chains" value="A=1-141"/>
</dbReference>
<dbReference type="PDBsum" id="3FH9"/>
<dbReference type="SMR" id="D0VX09"/>
<dbReference type="EvolutionaryTrace" id="D0VX09"/>
<dbReference type="Proteomes" id="UP000515202">
    <property type="component" value="Unplaced"/>
</dbReference>
<dbReference type="GO" id="GO:0072562">
    <property type="term" value="C:blood microparticle"/>
    <property type="evidence" value="ECO:0007669"/>
    <property type="project" value="TreeGrafter"/>
</dbReference>
<dbReference type="GO" id="GO:0031838">
    <property type="term" value="C:haptoglobin-hemoglobin complex"/>
    <property type="evidence" value="ECO:0007669"/>
    <property type="project" value="TreeGrafter"/>
</dbReference>
<dbReference type="GO" id="GO:0005833">
    <property type="term" value="C:hemoglobin complex"/>
    <property type="evidence" value="ECO:0007669"/>
    <property type="project" value="InterPro"/>
</dbReference>
<dbReference type="GO" id="GO:0031720">
    <property type="term" value="F:haptoglobin binding"/>
    <property type="evidence" value="ECO:0007669"/>
    <property type="project" value="TreeGrafter"/>
</dbReference>
<dbReference type="GO" id="GO:0020037">
    <property type="term" value="F:heme binding"/>
    <property type="evidence" value="ECO:0007669"/>
    <property type="project" value="InterPro"/>
</dbReference>
<dbReference type="GO" id="GO:0005506">
    <property type="term" value="F:iron ion binding"/>
    <property type="evidence" value="ECO:0007669"/>
    <property type="project" value="InterPro"/>
</dbReference>
<dbReference type="GO" id="GO:0043177">
    <property type="term" value="F:organic acid binding"/>
    <property type="evidence" value="ECO:0007669"/>
    <property type="project" value="TreeGrafter"/>
</dbReference>
<dbReference type="GO" id="GO:0019825">
    <property type="term" value="F:oxygen binding"/>
    <property type="evidence" value="ECO:0007669"/>
    <property type="project" value="InterPro"/>
</dbReference>
<dbReference type="GO" id="GO:0005344">
    <property type="term" value="F:oxygen carrier activity"/>
    <property type="evidence" value="ECO:0007669"/>
    <property type="project" value="UniProtKB-KW"/>
</dbReference>
<dbReference type="GO" id="GO:0004601">
    <property type="term" value="F:peroxidase activity"/>
    <property type="evidence" value="ECO:0007669"/>
    <property type="project" value="TreeGrafter"/>
</dbReference>
<dbReference type="GO" id="GO:0042744">
    <property type="term" value="P:hydrogen peroxide catabolic process"/>
    <property type="evidence" value="ECO:0007669"/>
    <property type="project" value="TreeGrafter"/>
</dbReference>
<dbReference type="CDD" id="cd08927">
    <property type="entry name" value="Hb-alpha-like"/>
    <property type="match status" value="1"/>
</dbReference>
<dbReference type="FunFam" id="1.10.490.10:FF:000002">
    <property type="entry name" value="Hemoglobin subunit alpha"/>
    <property type="match status" value="1"/>
</dbReference>
<dbReference type="Gene3D" id="1.10.490.10">
    <property type="entry name" value="Globins"/>
    <property type="match status" value="1"/>
</dbReference>
<dbReference type="InterPro" id="IPR000971">
    <property type="entry name" value="Globin"/>
</dbReference>
<dbReference type="InterPro" id="IPR009050">
    <property type="entry name" value="Globin-like_sf"/>
</dbReference>
<dbReference type="InterPro" id="IPR012292">
    <property type="entry name" value="Globin/Proto"/>
</dbReference>
<dbReference type="InterPro" id="IPR002338">
    <property type="entry name" value="Hemoglobin_a-typ"/>
</dbReference>
<dbReference type="InterPro" id="IPR050056">
    <property type="entry name" value="Hemoglobin_oxygen_transport"/>
</dbReference>
<dbReference type="InterPro" id="IPR002339">
    <property type="entry name" value="Hemoglobin_pi"/>
</dbReference>
<dbReference type="PANTHER" id="PTHR11442">
    <property type="entry name" value="HEMOGLOBIN FAMILY MEMBER"/>
    <property type="match status" value="1"/>
</dbReference>
<dbReference type="PANTHER" id="PTHR11442:SF48">
    <property type="entry name" value="HEMOGLOBIN SUBUNIT ALPHA"/>
    <property type="match status" value="1"/>
</dbReference>
<dbReference type="Pfam" id="PF00042">
    <property type="entry name" value="Globin"/>
    <property type="match status" value="1"/>
</dbReference>
<dbReference type="PRINTS" id="PR00612">
    <property type="entry name" value="ALPHAHAEM"/>
</dbReference>
<dbReference type="PRINTS" id="PR00815">
    <property type="entry name" value="PIHAEM"/>
</dbReference>
<dbReference type="SUPFAM" id="SSF46458">
    <property type="entry name" value="Globin-like"/>
    <property type="match status" value="1"/>
</dbReference>
<dbReference type="PROSITE" id="PS01033">
    <property type="entry name" value="GLOBIN"/>
    <property type="match status" value="1"/>
</dbReference>
<evidence type="ECO:0000250" key="1">
    <source>
        <dbReference type="UniProtKB" id="P01942"/>
    </source>
</evidence>
<evidence type="ECO:0000250" key="2">
    <source>
        <dbReference type="UniProtKB" id="P01946"/>
    </source>
</evidence>
<evidence type="ECO:0000250" key="3">
    <source>
        <dbReference type="UniProtKB" id="P14389"/>
    </source>
</evidence>
<evidence type="ECO:0000250" key="4">
    <source>
        <dbReference type="UniProtKB" id="P69905"/>
    </source>
</evidence>
<evidence type="ECO:0000255" key="5">
    <source>
        <dbReference type="PROSITE-ProRule" id="PRU00238"/>
    </source>
</evidence>
<evidence type="ECO:0000305" key="6"/>
<evidence type="ECO:0000312" key="7">
    <source>
        <dbReference type="PDB" id="3FH9"/>
    </source>
</evidence>
<evidence type="ECO:0007829" key="8">
    <source>
        <dbReference type="PDB" id="3FH9"/>
    </source>
</evidence>
<name>HBA_PTEVA</name>
<accession>D0VX09</accession>
<accession>P86191</accession>
<sequence>VLSSTDKSNVKAAWDKVGGNVGEYGAEALERMFLSFPTTKTYFPHFDLAHGSSQVKAHGKKVGDALTNAVGHIDDLPGALSALSDLHAYKLRVDPVNFKLLSHCLLVTLASHLPSDFTPAVHASLDKFLASVSTVLTSKYR</sequence>
<organism>
    <name type="scientific">Pteropus vampyrus</name>
    <name type="common">Large flying fox</name>
    <dbReference type="NCBI Taxonomy" id="132908"/>
    <lineage>
        <taxon>Eukaryota</taxon>
        <taxon>Metazoa</taxon>
        <taxon>Chordata</taxon>
        <taxon>Craniata</taxon>
        <taxon>Vertebrata</taxon>
        <taxon>Euteleostomi</taxon>
        <taxon>Mammalia</taxon>
        <taxon>Eutheria</taxon>
        <taxon>Laurasiatheria</taxon>
        <taxon>Chiroptera</taxon>
        <taxon>Yinpterochiroptera</taxon>
        <taxon>Pteropodoidea</taxon>
        <taxon>Pteropodidae</taxon>
        <taxon>Pteropodinae</taxon>
        <taxon>Pteropus</taxon>
    </lineage>
</organism>
<keyword id="KW-0002">3D-structure</keyword>
<keyword id="KW-0007">Acetylation</keyword>
<keyword id="KW-0349">Heme</keyword>
<keyword id="KW-0408">Iron</keyword>
<keyword id="KW-0479">Metal-binding</keyword>
<keyword id="KW-0561">Oxygen transport</keyword>
<keyword id="KW-0597">Phosphoprotein</keyword>
<keyword id="KW-1185">Reference proteome</keyword>
<keyword id="KW-0813">Transport</keyword>
<feature type="chain" id="PRO_0000398145" description="Hemoglobin subunit alpha">
    <location>
        <begin position="1"/>
        <end position="141"/>
    </location>
</feature>
<feature type="peptide" id="PRO_0000455935" description="Hemopressin" evidence="2">
    <location>
        <begin position="95"/>
        <end position="103"/>
    </location>
</feature>
<feature type="domain" description="Globin" evidence="5">
    <location>
        <begin position="1"/>
        <end position="141"/>
    </location>
</feature>
<feature type="binding site" evidence="5">
    <location>
        <position position="58"/>
    </location>
    <ligand>
        <name>O2</name>
        <dbReference type="ChEBI" id="CHEBI:15379"/>
    </ligand>
</feature>
<feature type="binding site" description="proximal binding residue" evidence="5">
    <location>
        <position position="87"/>
    </location>
    <ligand>
        <name>heme b</name>
        <dbReference type="ChEBI" id="CHEBI:60344"/>
    </ligand>
    <ligandPart>
        <name>Fe</name>
        <dbReference type="ChEBI" id="CHEBI:18248"/>
    </ligandPart>
</feature>
<feature type="modified residue" description="Phosphoserine" evidence="4">
    <location>
        <position position="3"/>
    </location>
</feature>
<feature type="modified residue" description="N6-succinyllysine" evidence="1">
    <location>
        <position position="7"/>
    </location>
</feature>
<feature type="modified residue" description="N6-succinyllysine" evidence="1">
    <location>
        <position position="11"/>
    </location>
</feature>
<feature type="modified residue" description="N6-acetyllysine; alternate" evidence="4">
    <location>
        <position position="16"/>
    </location>
</feature>
<feature type="modified residue" description="N6-succinyllysine; alternate" evidence="1">
    <location>
        <position position="16"/>
    </location>
</feature>
<feature type="modified residue" description="Phosphotyrosine" evidence="4">
    <location>
        <position position="24"/>
    </location>
</feature>
<feature type="modified residue" description="Phosphoserine" evidence="4">
    <location>
        <position position="35"/>
    </location>
</feature>
<feature type="modified residue" description="N6-succinyllysine" evidence="1">
    <location>
        <position position="40"/>
    </location>
</feature>
<feature type="modified residue" description="Phosphoserine" evidence="1">
    <location>
        <position position="102"/>
    </location>
</feature>
<feature type="modified residue" description="Phosphothreonine" evidence="1">
    <location>
        <position position="108"/>
    </location>
</feature>
<feature type="modified residue" description="Phosphoserine" evidence="1">
    <location>
        <position position="124"/>
    </location>
</feature>
<feature type="modified residue" description="Phosphoserine" evidence="1">
    <location>
        <position position="131"/>
    </location>
</feature>
<feature type="modified residue" description="Phosphothreonine" evidence="1">
    <location>
        <position position="134"/>
    </location>
</feature>
<feature type="modified residue" description="Phosphothreonine" evidence="1">
    <location>
        <position position="137"/>
    </location>
</feature>
<feature type="modified residue" description="Phosphoserine" evidence="1">
    <location>
        <position position="138"/>
    </location>
</feature>
<feature type="helix" evidence="8">
    <location>
        <begin position="4"/>
        <end position="17"/>
    </location>
</feature>
<feature type="helix" evidence="8">
    <location>
        <begin position="21"/>
        <end position="35"/>
    </location>
</feature>
<feature type="helix" evidence="8">
    <location>
        <begin position="37"/>
        <end position="42"/>
    </location>
</feature>
<feature type="helix" evidence="8">
    <location>
        <begin position="53"/>
        <end position="71"/>
    </location>
</feature>
<feature type="turn" evidence="8">
    <location>
        <begin position="72"/>
        <end position="74"/>
    </location>
</feature>
<feature type="helix" evidence="8">
    <location>
        <begin position="76"/>
        <end position="79"/>
    </location>
</feature>
<feature type="helix" evidence="8">
    <location>
        <begin position="81"/>
        <end position="89"/>
    </location>
</feature>
<feature type="helix" evidence="8">
    <location>
        <begin position="95"/>
        <end position="112"/>
    </location>
</feature>
<feature type="turn" evidence="8">
    <location>
        <begin position="114"/>
        <end position="116"/>
    </location>
</feature>
<feature type="helix" evidence="8">
    <location>
        <begin position="119"/>
        <end position="136"/>
    </location>
</feature>
<gene>
    <name evidence="3" type="primary">HBA</name>
</gene>
<reference evidence="6 7" key="1">
    <citation type="submission" date="2008-12" db="PDB data bank">
        <title>Crystal structure determination of Indian flying fox (Pteropus giganteus) at 1.62 A resolution.</title>
        <authorList>
            <person name="Moorthy P.S."/>
            <person name="Neelagandan K."/>
            <person name="Balasubramanian M."/>
            <person name="Thenmozhi M."/>
            <person name="Ponnuswamy M.N."/>
        </authorList>
    </citation>
    <scope>X-RAY CRYSTALLOGRAPHY (1.62 ANGSTROMS)</scope>
</reference>
<proteinExistence type="evidence at protein level"/>
<comment type="function">
    <text evidence="6">Involved in oxygen transport from the lung to the various peripheral tissues.</text>
</comment>
<comment type="function">
    <molecule>Hemopressin</molecule>
    <text evidence="2">Hemopressin acts as an antagonist peptide of the cannabinoid receptor CNR1. Hemopressin-binding efficiently blocks cannabinoid receptor CNR1 and subsequent signaling.</text>
</comment>
<comment type="subunit">
    <text evidence="6">Heterotetramer of two alpha chains and two beta chains.</text>
</comment>
<comment type="tissue specificity">
    <text evidence="6">Red blood cells.</text>
</comment>
<comment type="similarity">
    <text evidence="5">Belongs to the globin family.</text>
</comment>